<feature type="peptide" id="PRO_0000457089" description="Melittin-related peptide AK-23-1">
    <location>
        <begin position="1"/>
        <end position="23"/>
    </location>
</feature>
<feature type="modified residue" description="Lysine amide" evidence="1">
    <location>
        <position position="23"/>
    </location>
</feature>
<protein>
    <recommendedName>
        <fullName evidence="2">Melittin-related peptide AK-23-1</fullName>
    </recommendedName>
</protein>
<proteinExistence type="evidence at protein level"/>
<name>MLP2_RANAR</name>
<comment type="subcellular location">
    <subcellularLocation>
        <location evidence="1">Secreted</location>
    </subcellularLocation>
</comment>
<comment type="tissue specificity">
    <text evidence="1">Expressed by the skin glands.</text>
</comment>
<comment type="mass spectrometry" mass="2361.43" method="Electrospray" evidence="1"/>
<sequence length="23" mass="2364">ALGGVLKALAKGLPSVISWINQK</sequence>
<keyword id="KW-0027">Amidation</keyword>
<keyword id="KW-0903">Direct protein sequencing</keyword>
<keyword id="KW-0964">Secreted</keyword>
<organism evidence="2">
    <name type="scientific">Rana arvalis</name>
    <name type="common">Moor frog</name>
    <dbReference type="NCBI Taxonomy" id="156871"/>
    <lineage>
        <taxon>Eukaryota</taxon>
        <taxon>Metazoa</taxon>
        <taxon>Chordata</taxon>
        <taxon>Craniata</taxon>
        <taxon>Vertebrata</taxon>
        <taxon>Euteleostomi</taxon>
        <taxon>Amphibia</taxon>
        <taxon>Batrachia</taxon>
        <taxon>Anura</taxon>
        <taxon>Neobatrachia</taxon>
        <taxon>Ranoidea</taxon>
        <taxon>Ranidae</taxon>
        <taxon>Rana</taxon>
        <taxon>Rana</taxon>
    </lineage>
</organism>
<reference evidence="3" key="1">
    <citation type="journal article" date="2022" name="J. Am. Soc. Mass Spectrom.">
        <title>Mass Spectrometry Differentiation between Rana arvalis Populations Based on Their Skin Peptidome Composition.</title>
        <authorList>
            <person name="Samgina T.Y."/>
            <person name="Vasileva I.D."/>
            <person name="Trebse P."/>
            <person name="Torkar G."/>
            <person name="Surin A.K."/>
            <person name="Meng Z."/>
            <person name="Zubarev R.A."/>
            <person name="Lebedev A.T."/>
        </authorList>
    </citation>
    <scope>PROTEIN SEQUENCE</scope>
    <scope>IDENTIFICATION BY MASS SPECTROMETRY</scope>
    <scope>SUBCELLULAR LOCATION</scope>
    <scope>TISSUE SPECIFICITY</scope>
    <scope>AMIDATION AT LYS-23</scope>
    <source>
        <tissue evidence="2">Skin secretion</tissue>
    </source>
</reference>
<evidence type="ECO:0000269" key="1">
    <source>
    </source>
</evidence>
<evidence type="ECO:0000303" key="2">
    <source>
    </source>
</evidence>
<evidence type="ECO:0000305" key="3"/>
<accession>C0HM57</accession>
<dbReference type="GO" id="GO:0005576">
    <property type="term" value="C:extracellular region"/>
    <property type="evidence" value="ECO:0000314"/>
    <property type="project" value="UniProtKB"/>
</dbReference>
<dbReference type="GO" id="GO:0004860">
    <property type="term" value="F:protein kinase inhibitor activity"/>
    <property type="evidence" value="ECO:0007669"/>
    <property type="project" value="InterPro"/>
</dbReference>
<dbReference type="InterPro" id="IPR002116">
    <property type="entry name" value="Melittin/Api_allergen"/>
</dbReference>
<dbReference type="Pfam" id="PF01372">
    <property type="entry name" value="Melittin"/>
    <property type="match status" value="1"/>
</dbReference>